<proteinExistence type="inferred from homology"/>
<gene>
    <name evidence="1" type="primary">rps11</name>
</gene>
<comment type="subunit">
    <text evidence="1">Part of the 30S ribosomal subunit.</text>
</comment>
<comment type="subcellular location">
    <subcellularLocation>
        <location>Plastid</location>
        <location>Chloroplast</location>
    </subcellularLocation>
</comment>
<comment type="similarity">
    <text evidence="1">Belongs to the universal ribosomal protein uS11 family.</text>
</comment>
<dbReference type="EMBL" id="EU262890">
    <property type="protein sequence ID" value="ABX10070.1"/>
    <property type="molecule type" value="Genomic_DNA"/>
</dbReference>
<dbReference type="RefSeq" id="YP_001687316.1">
    <property type="nucleotide sequence ID" value="NC_010360.2"/>
</dbReference>
<dbReference type="SMR" id="B0Z577"/>
<dbReference type="GeneID" id="5955317"/>
<dbReference type="GO" id="GO:0009507">
    <property type="term" value="C:chloroplast"/>
    <property type="evidence" value="ECO:0007669"/>
    <property type="project" value="UniProtKB-SubCell"/>
</dbReference>
<dbReference type="GO" id="GO:1990904">
    <property type="term" value="C:ribonucleoprotein complex"/>
    <property type="evidence" value="ECO:0007669"/>
    <property type="project" value="UniProtKB-KW"/>
</dbReference>
<dbReference type="GO" id="GO:0005840">
    <property type="term" value="C:ribosome"/>
    <property type="evidence" value="ECO:0007669"/>
    <property type="project" value="UniProtKB-KW"/>
</dbReference>
<dbReference type="GO" id="GO:0019843">
    <property type="term" value="F:rRNA binding"/>
    <property type="evidence" value="ECO:0007669"/>
    <property type="project" value="UniProtKB-UniRule"/>
</dbReference>
<dbReference type="GO" id="GO:0003735">
    <property type="term" value="F:structural constituent of ribosome"/>
    <property type="evidence" value="ECO:0007669"/>
    <property type="project" value="InterPro"/>
</dbReference>
<dbReference type="GO" id="GO:0006412">
    <property type="term" value="P:translation"/>
    <property type="evidence" value="ECO:0007669"/>
    <property type="project" value="UniProtKB-UniRule"/>
</dbReference>
<dbReference type="FunFam" id="3.30.420.80:FF:000003">
    <property type="entry name" value="30S ribosomal protein S11, chloroplastic"/>
    <property type="match status" value="1"/>
</dbReference>
<dbReference type="Gene3D" id="3.30.420.80">
    <property type="entry name" value="Ribosomal protein S11"/>
    <property type="match status" value="1"/>
</dbReference>
<dbReference type="HAMAP" id="MF_01310">
    <property type="entry name" value="Ribosomal_uS11"/>
    <property type="match status" value="1"/>
</dbReference>
<dbReference type="InterPro" id="IPR001971">
    <property type="entry name" value="Ribosomal_uS11"/>
</dbReference>
<dbReference type="InterPro" id="IPR019981">
    <property type="entry name" value="Ribosomal_uS11_bac-type"/>
</dbReference>
<dbReference type="InterPro" id="IPR018102">
    <property type="entry name" value="Ribosomal_uS11_CS"/>
</dbReference>
<dbReference type="InterPro" id="IPR036967">
    <property type="entry name" value="Ribosomal_uS11_sf"/>
</dbReference>
<dbReference type="NCBIfam" id="NF003698">
    <property type="entry name" value="PRK05309.1"/>
    <property type="match status" value="1"/>
</dbReference>
<dbReference type="NCBIfam" id="TIGR03632">
    <property type="entry name" value="uS11_bact"/>
    <property type="match status" value="1"/>
</dbReference>
<dbReference type="PANTHER" id="PTHR11759">
    <property type="entry name" value="40S RIBOSOMAL PROTEIN S14/30S RIBOSOMAL PROTEIN S11"/>
    <property type="match status" value="1"/>
</dbReference>
<dbReference type="Pfam" id="PF00411">
    <property type="entry name" value="Ribosomal_S11"/>
    <property type="match status" value="1"/>
</dbReference>
<dbReference type="PIRSF" id="PIRSF002131">
    <property type="entry name" value="Ribosomal_S11"/>
    <property type="match status" value="1"/>
</dbReference>
<dbReference type="SUPFAM" id="SSF53137">
    <property type="entry name" value="Translational machinery components"/>
    <property type="match status" value="1"/>
</dbReference>
<dbReference type="PROSITE" id="PS00054">
    <property type="entry name" value="RIBOSOMAL_S11"/>
    <property type="match status" value="1"/>
</dbReference>
<reference key="1">
    <citation type="journal article" date="2008" name="Nucleic Acids Res.">
        <title>The complete nucleotide sequences of the five genetically distinct plastid genomes of Oenothera, subsection Oenothera: I. Sequence evaluation and plastome evolution.</title>
        <authorList>
            <person name="Greiner S."/>
            <person name="Wang X."/>
            <person name="Rauwolf U."/>
            <person name="Silber M.V."/>
            <person name="Mayer K."/>
            <person name="Meurer J."/>
            <person name="Haberer G."/>
            <person name="Herrmann R.G."/>
        </authorList>
    </citation>
    <scope>NUCLEOTIDE SEQUENCE [LARGE SCALE GENOMIC DNA]</scope>
    <source>
        <strain>cv. Rr-lamarckiana Sweden</strain>
    </source>
</reference>
<name>RR11_OENGL</name>
<feature type="chain" id="PRO_0000364220" description="Small ribosomal subunit protein uS11c">
    <location>
        <begin position="1"/>
        <end position="144"/>
    </location>
</feature>
<accession>B0Z577</accession>
<protein>
    <recommendedName>
        <fullName evidence="1">Small ribosomal subunit protein uS11c</fullName>
    </recommendedName>
    <alternativeName>
        <fullName evidence="2">30S ribosomal protein S11, chloroplastic</fullName>
    </alternativeName>
</protein>
<organism>
    <name type="scientific">Oenothera glazioviana</name>
    <name type="common">Large-flowered evening primrose</name>
    <name type="synonym">Oenothera erythrosepala</name>
    <dbReference type="NCBI Taxonomy" id="482428"/>
    <lineage>
        <taxon>Eukaryota</taxon>
        <taxon>Viridiplantae</taxon>
        <taxon>Streptophyta</taxon>
        <taxon>Embryophyta</taxon>
        <taxon>Tracheophyta</taxon>
        <taxon>Spermatophyta</taxon>
        <taxon>Magnoliopsida</taxon>
        <taxon>eudicotyledons</taxon>
        <taxon>Gunneridae</taxon>
        <taxon>Pentapetalae</taxon>
        <taxon>rosids</taxon>
        <taxon>malvids</taxon>
        <taxon>Myrtales</taxon>
        <taxon>Onagraceae</taxon>
        <taxon>Onagroideae</taxon>
        <taxon>Onagreae</taxon>
        <taxon>Oenothera</taxon>
    </lineage>
</organism>
<geneLocation type="chloroplast"/>
<sequence>MAKSIPSAGLRLRLRLRRNARRRSRKSTRKIPKGVIHVQASFHNTIVTVTDVRGRVISWSSAGTCGFKSTRKGTPFAAQTAAGDAIRPVVDQGMQRAEVRIKGPGLGRDAALRAIRRSGIRLSCIRDVTPLPHNGCRPPKKRRV</sequence>
<keyword id="KW-0150">Chloroplast</keyword>
<keyword id="KW-0934">Plastid</keyword>
<keyword id="KW-0687">Ribonucleoprotein</keyword>
<keyword id="KW-0689">Ribosomal protein</keyword>
<keyword id="KW-0694">RNA-binding</keyword>
<keyword id="KW-0699">rRNA-binding</keyword>
<evidence type="ECO:0000255" key="1">
    <source>
        <dbReference type="HAMAP-Rule" id="MF_01310"/>
    </source>
</evidence>
<evidence type="ECO:0000305" key="2"/>